<comment type="function">
    <text>Could be involved in late stage of protein degradation.</text>
</comment>
<comment type="catalytic activity">
    <reaction>
        <text>Cleavage of Pro-|-Phe and Ala-|-Ala bonds.</text>
        <dbReference type="EC" id="3.4.24.37"/>
    </reaction>
</comment>
<comment type="cofactor">
    <cofactor evidence="1">
        <name>Zn(2+)</name>
        <dbReference type="ChEBI" id="CHEBI:29105"/>
    </cofactor>
    <text evidence="1">Binds 1 zinc ion.</text>
</comment>
<comment type="subcellular location">
    <subcellularLocation>
        <location>Cytoplasm</location>
    </subcellularLocation>
</comment>
<comment type="miscellaneous">
    <text evidence="3">Present with 8910 molecules/cell in log phase SD medium.</text>
</comment>
<comment type="similarity">
    <text evidence="4">Belongs to the peptidase M3 family.</text>
</comment>
<protein>
    <recommendedName>
        <fullName>Saccharolysin</fullName>
        <ecNumber>3.4.24.37</ecNumber>
    </recommendedName>
    <alternativeName>
        <fullName>Oligopeptidase YSCD</fullName>
    </alternativeName>
    <alternativeName>
        <fullName>Protease D</fullName>
    </alternativeName>
    <alternativeName>
        <fullName>Proteinase yscD</fullName>
    </alternativeName>
</protein>
<accession>P25375</accession>
<accession>D6VQW0</accession>
<accession>E9P942</accession>
<organism>
    <name type="scientific">Saccharomyces cerevisiae (strain ATCC 204508 / S288c)</name>
    <name type="common">Baker's yeast</name>
    <dbReference type="NCBI Taxonomy" id="559292"/>
    <lineage>
        <taxon>Eukaryota</taxon>
        <taxon>Fungi</taxon>
        <taxon>Dikarya</taxon>
        <taxon>Ascomycota</taxon>
        <taxon>Saccharomycotina</taxon>
        <taxon>Saccharomycetes</taxon>
        <taxon>Saccharomycetales</taxon>
        <taxon>Saccharomycetaceae</taxon>
        <taxon>Saccharomyces</taxon>
    </lineage>
</organism>
<dbReference type="EC" id="3.4.24.37"/>
<dbReference type="EMBL" id="X76504">
    <property type="protein sequence ID" value="CAA54039.1"/>
    <property type="molecule type" value="Genomic_DNA"/>
</dbReference>
<dbReference type="EMBL" id="X59720">
    <property type="protein sequence ID" value="CAA42388.1"/>
    <property type="molecule type" value="Genomic_DNA"/>
</dbReference>
<dbReference type="EMBL" id="AY723761">
    <property type="protein sequence ID" value="AAU09678.1"/>
    <property type="molecule type" value="Genomic_DNA"/>
</dbReference>
<dbReference type="EMBL" id="BK006937">
    <property type="protein sequence ID" value="DAA07429.1"/>
    <property type="molecule type" value="Genomic_DNA"/>
</dbReference>
<dbReference type="PIR" id="S19387">
    <property type="entry name" value="S19387"/>
</dbReference>
<dbReference type="RefSeq" id="NP_009874.1">
    <property type="nucleotide sequence ID" value="NM_001178701.1"/>
</dbReference>
<dbReference type="SMR" id="P25375"/>
<dbReference type="BioGRID" id="30929">
    <property type="interactions" value="26"/>
</dbReference>
<dbReference type="DIP" id="DIP-4938N"/>
<dbReference type="FunCoup" id="P25375">
    <property type="interactions" value="891"/>
</dbReference>
<dbReference type="IntAct" id="P25375">
    <property type="interactions" value="6"/>
</dbReference>
<dbReference type="MINT" id="P25375"/>
<dbReference type="STRING" id="4932.YCL057W"/>
<dbReference type="MEROPS" id="M03.003"/>
<dbReference type="iPTMnet" id="P25375"/>
<dbReference type="PaxDb" id="4932-YCL057W"/>
<dbReference type="PeptideAtlas" id="P25375"/>
<dbReference type="EnsemblFungi" id="YCL057W_mRNA">
    <property type="protein sequence ID" value="YCL057W"/>
    <property type="gene ID" value="YCL057W"/>
</dbReference>
<dbReference type="GeneID" id="850301"/>
<dbReference type="KEGG" id="sce:YCL057W"/>
<dbReference type="AGR" id="SGD:S000000562"/>
<dbReference type="SGD" id="S000000562">
    <property type="gene designation" value="PRD1"/>
</dbReference>
<dbReference type="VEuPathDB" id="FungiDB:YCL057W"/>
<dbReference type="eggNOG" id="KOG2089">
    <property type="taxonomic scope" value="Eukaryota"/>
</dbReference>
<dbReference type="GeneTree" id="ENSGT00950000183171"/>
<dbReference type="HOGENOM" id="CLU_001805_1_1_1"/>
<dbReference type="InParanoid" id="P25375"/>
<dbReference type="OMA" id="MYTREGK"/>
<dbReference type="OrthoDB" id="534666at2759"/>
<dbReference type="BioCyc" id="YEAST:YCL057W-MONOMER"/>
<dbReference type="Reactome" id="R-SCE-983168">
    <property type="pathway name" value="Antigen processing: Ubiquitination &amp; Proteasome degradation"/>
</dbReference>
<dbReference type="BioGRID-ORCS" id="850301">
    <property type="hits" value="0 hits in 10 CRISPR screens"/>
</dbReference>
<dbReference type="PRO" id="PR:P25375"/>
<dbReference type="Proteomes" id="UP000002311">
    <property type="component" value="Chromosome III"/>
</dbReference>
<dbReference type="RNAct" id="P25375">
    <property type="molecule type" value="protein"/>
</dbReference>
<dbReference type="GO" id="GO:0005737">
    <property type="term" value="C:cytoplasm"/>
    <property type="evidence" value="ECO:0000314"/>
    <property type="project" value="SGD"/>
</dbReference>
<dbReference type="GO" id="GO:0000324">
    <property type="term" value="C:fungal-type vacuole"/>
    <property type="evidence" value="ECO:0000314"/>
    <property type="project" value="SGD"/>
</dbReference>
<dbReference type="GO" id="GO:0005794">
    <property type="term" value="C:Golgi apparatus"/>
    <property type="evidence" value="ECO:0000314"/>
    <property type="project" value="SGD"/>
</dbReference>
<dbReference type="GO" id="GO:0005758">
    <property type="term" value="C:mitochondrial intermembrane space"/>
    <property type="evidence" value="ECO:0000314"/>
    <property type="project" value="SGD"/>
</dbReference>
<dbReference type="GO" id="GO:0005739">
    <property type="term" value="C:mitochondrion"/>
    <property type="evidence" value="ECO:0007005"/>
    <property type="project" value="SGD"/>
</dbReference>
<dbReference type="GO" id="GO:0046872">
    <property type="term" value="F:metal ion binding"/>
    <property type="evidence" value="ECO:0007669"/>
    <property type="project" value="UniProtKB-KW"/>
</dbReference>
<dbReference type="GO" id="GO:0004222">
    <property type="term" value="F:metalloendopeptidase activity"/>
    <property type="evidence" value="ECO:0000314"/>
    <property type="project" value="SGD"/>
</dbReference>
<dbReference type="GO" id="GO:0006518">
    <property type="term" value="P:peptide metabolic process"/>
    <property type="evidence" value="ECO:0000318"/>
    <property type="project" value="GO_Central"/>
</dbReference>
<dbReference type="GO" id="GO:0006508">
    <property type="term" value="P:proteolysis"/>
    <property type="evidence" value="ECO:0000314"/>
    <property type="project" value="SGD"/>
</dbReference>
<dbReference type="CDD" id="cd06455">
    <property type="entry name" value="M3A_TOP"/>
    <property type="match status" value="1"/>
</dbReference>
<dbReference type="FunFam" id="1.20.1050.40:FF:000001">
    <property type="entry name" value="Thimet oligopeptidase 1"/>
    <property type="match status" value="1"/>
</dbReference>
<dbReference type="FunFam" id="3.40.390.10:FF:000006">
    <property type="entry name" value="Thimet oligopeptidase 1"/>
    <property type="match status" value="1"/>
</dbReference>
<dbReference type="Gene3D" id="3.40.390.10">
    <property type="entry name" value="Collagenase (Catalytic Domain)"/>
    <property type="match status" value="1"/>
</dbReference>
<dbReference type="Gene3D" id="1.20.1050.40">
    <property type="entry name" value="Endopeptidase. Chain P, domain 1"/>
    <property type="match status" value="1"/>
</dbReference>
<dbReference type="Gene3D" id="1.10.1370.10">
    <property type="entry name" value="Neurolysin, domain 3"/>
    <property type="match status" value="1"/>
</dbReference>
<dbReference type="InterPro" id="IPR024079">
    <property type="entry name" value="MetalloPept_cat_dom_sf"/>
</dbReference>
<dbReference type="InterPro" id="IPR024077">
    <property type="entry name" value="Neurolysin/TOP_dom2"/>
</dbReference>
<dbReference type="InterPro" id="IPR024080">
    <property type="entry name" value="Neurolysin/TOP_N"/>
</dbReference>
<dbReference type="InterPro" id="IPR045090">
    <property type="entry name" value="Pept_M3A_M3B"/>
</dbReference>
<dbReference type="InterPro" id="IPR001567">
    <property type="entry name" value="Pept_M3A_M3B_dom"/>
</dbReference>
<dbReference type="PANTHER" id="PTHR11804">
    <property type="entry name" value="PROTEASE M3 THIMET OLIGOPEPTIDASE-RELATED"/>
    <property type="match status" value="1"/>
</dbReference>
<dbReference type="PANTHER" id="PTHR11804:SF84">
    <property type="entry name" value="SACCHAROLYSIN"/>
    <property type="match status" value="1"/>
</dbReference>
<dbReference type="Pfam" id="PF01432">
    <property type="entry name" value="Peptidase_M3"/>
    <property type="match status" value="1"/>
</dbReference>
<dbReference type="SUPFAM" id="SSF55486">
    <property type="entry name" value="Metalloproteases ('zincins'), catalytic domain"/>
    <property type="match status" value="1"/>
</dbReference>
<dbReference type="PROSITE" id="PS00142">
    <property type="entry name" value="ZINC_PROTEASE"/>
    <property type="match status" value="1"/>
</dbReference>
<keyword id="KW-0963">Cytoplasm</keyword>
<keyword id="KW-0378">Hydrolase</keyword>
<keyword id="KW-0479">Metal-binding</keyword>
<keyword id="KW-0482">Metalloprotease</keyword>
<keyword id="KW-0597">Phosphoprotein</keyword>
<keyword id="KW-0645">Protease</keyword>
<keyword id="KW-1185">Reference proteome</keyword>
<keyword id="KW-0862">Zinc</keyword>
<feature type="chain" id="PRO_0000078156" description="Saccharolysin">
    <location>
        <begin position="1"/>
        <end position="712"/>
    </location>
</feature>
<feature type="active site" evidence="2">
    <location>
        <position position="502"/>
    </location>
</feature>
<feature type="binding site" evidence="2">
    <location>
        <position position="501"/>
    </location>
    <ligand>
        <name>Zn(2+)</name>
        <dbReference type="ChEBI" id="CHEBI:29105"/>
        <note>catalytic</note>
    </ligand>
</feature>
<feature type="binding site" evidence="2">
    <location>
        <position position="505"/>
    </location>
    <ligand>
        <name>Zn(2+)</name>
        <dbReference type="ChEBI" id="CHEBI:29105"/>
        <note>catalytic</note>
    </ligand>
</feature>
<feature type="binding site" evidence="2">
    <location>
        <position position="508"/>
    </location>
    <ligand>
        <name>Zn(2+)</name>
        <dbReference type="ChEBI" id="CHEBI:29105"/>
        <note>catalytic</note>
    </ligand>
</feature>
<feature type="modified residue" description="Phosphoserine" evidence="5 6 7">
    <location>
        <position position="73"/>
    </location>
</feature>
<feature type="sequence conflict" description="In Ref. 4; AAU09678." evidence="4" ref="4">
    <original>L</original>
    <variation>P</variation>
    <location>
        <position position="384"/>
    </location>
</feature>
<sequence length="712" mass="81934">MRLLLCKNWFASPVISPLLYTRSLYSMANTTSFPIAPQAPPNWSFTPSDISGKTNEIINNSNNFYDSMSKVESPSVSNFVEPFMKFENELGPIINQLTFLQHVSSDKEIRDASVNSSMKLDELNIDLSLRHDIFLQFARVWQDVQSKADSVERETFKYVEKSYKDYIHSGLELDEGNRLKIKEIKKKISVNSINFSKNLGEQKEYITFTKEQLEGVPDSILTQFETIKSDKDSNETLYKVTFKYPDIFPVMKLASSAQTRKQAFLADQNKVPENEAILLDTLKLRDELASLLGYDTYANYNLYDKMAEDSTTVMNFLNDLKDKLIPLGRKELQVLQDMKAEDVKKLNQGADPNYYIWDHRYYDNKYLLENFNVDLEKISEYFPLEATITGMLEIYETLFNLKFIETKDSQNKSVWHDDVKQIAVWNMDDPKSPNFVGWIYFDLHPRDGKYGHAANFGLSSSFMIDDTTRSYPVTALVCNFSKSTKDKPSLLKHNEIVTFFHELGHGIHDLVGQNKESRFNGPGSVPWDFVEAPSQMLEFWTWNKNELINLSSHYKTGEKIPESLINSLIKTKHVNGALFTLRQLHFGLFDMKVHTCKDLQNLSICDTWNQLRQDISLISNGGTLSKGYDSFGHIMSDSYSAGYYGYLWAEVFATDMYHTKFAKDPLNAKNGIQYRDIVLARGGLYDINDNLKEFLGREPSKDAFLKELGLQN</sequence>
<evidence type="ECO:0000250" key="1"/>
<evidence type="ECO:0000255" key="2">
    <source>
        <dbReference type="PROSITE-ProRule" id="PRU10095"/>
    </source>
</evidence>
<evidence type="ECO:0000269" key="3">
    <source>
    </source>
</evidence>
<evidence type="ECO:0000305" key="4"/>
<evidence type="ECO:0007744" key="5">
    <source>
    </source>
</evidence>
<evidence type="ECO:0007744" key="6">
    <source>
    </source>
</evidence>
<evidence type="ECO:0007744" key="7">
    <source>
    </source>
</evidence>
<proteinExistence type="evidence at protein level"/>
<name>PRTD_YEAST</name>
<gene>
    <name type="primary">PRD1</name>
    <name type="ordered locus">YCL057W</name>
    <name type="ORF">YCL57W</name>
</gene>
<reference key="1">
    <citation type="journal article" date="1994" name="Eur. J. Biochem.">
        <title>Proteinase yscD (oligopeptidase yscD). Structure, function and relationship of the yeast enzyme with mammalian thimet oligopeptidase (metalloendopeptidase, EP 24.15).</title>
        <authorList>
            <person name="Buechler M."/>
            <person name="Tisljar U."/>
            <person name="Wolf D.H."/>
        </authorList>
    </citation>
    <scope>NUCLEOTIDE SEQUENCE [GENOMIC DNA]</scope>
</reference>
<reference key="2">
    <citation type="journal article" date="1992" name="Nature">
        <title>The complete DNA sequence of yeast chromosome III.</title>
        <authorList>
            <person name="Oliver S.G."/>
            <person name="van der Aart Q.J.M."/>
            <person name="Agostoni-Carbone M.L."/>
            <person name="Aigle M."/>
            <person name="Alberghina L."/>
            <person name="Alexandraki D."/>
            <person name="Antoine G."/>
            <person name="Anwar R."/>
            <person name="Ballesta J.P.G."/>
            <person name="Benit P."/>
            <person name="Berben G."/>
            <person name="Bergantino E."/>
            <person name="Biteau N."/>
            <person name="Bolle P.-A."/>
            <person name="Bolotin-Fukuhara M."/>
            <person name="Brown A."/>
            <person name="Brown A.J.P."/>
            <person name="Buhler J.-M."/>
            <person name="Carcano C."/>
            <person name="Carignani G."/>
            <person name="Cederberg H."/>
            <person name="Chanet R."/>
            <person name="Contreras R."/>
            <person name="Crouzet M."/>
            <person name="Daignan-Fornier B."/>
            <person name="Defoor E."/>
            <person name="Delgado M.D."/>
            <person name="Demolder J."/>
            <person name="Doira C."/>
            <person name="Dubois E."/>
            <person name="Dujon B."/>
            <person name="Duesterhoeft A."/>
            <person name="Erdmann D."/>
            <person name="Esteban M."/>
            <person name="Fabre F."/>
            <person name="Fairhead C."/>
            <person name="Faye G."/>
            <person name="Feldmann H."/>
            <person name="Fiers W."/>
            <person name="Francingues-Gaillard M.-C."/>
            <person name="Franco L."/>
            <person name="Frontali L."/>
            <person name="Fukuhara H."/>
            <person name="Fuller L.J."/>
            <person name="Galland P."/>
            <person name="Gent M.E."/>
            <person name="Gigot D."/>
            <person name="Gilliquet V."/>
            <person name="Glansdorff N."/>
            <person name="Goffeau A."/>
            <person name="Grenson M."/>
            <person name="Grisanti P."/>
            <person name="Grivell L.A."/>
            <person name="de Haan M."/>
            <person name="Haasemann M."/>
            <person name="Hatat D."/>
            <person name="Hoenicka J."/>
            <person name="Hegemann J.H."/>
            <person name="Herbert C.J."/>
            <person name="Hilger F."/>
            <person name="Hohmann S."/>
            <person name="Hollenberg C.P."/>
            <person name="Huse K."/>
            <person name="Iborra F."/>
            <person name="Indge K.J."/>
            <person name="Isono K."/>
            <person name="Jacq C."/>
            <person name="Jacquet M."/>
            <person name="James C.M."/>
            <person name="Jauniaux J.-C."/>
            <person name="Jia Y."/>
            <person name="Jimenez A."/>
            <person name="Kelly A."/>
            <person name="Kleinhans U."/>
            <person name="Kreisl P."/>
            <person name="Lanfranchi G."/>
            <person name="Lewis C."/>
            <person name="van der Linden C.G."/>
            <person name="Lucchini G."/>
            <person name="Lutzenkirchen K."/>
            <person name="Maat M.J."/>
            <person name="Mallet L."/>
            <person name="Mannhaupt G."/>
            <person name="Martegani E."/>
            <person name="Mathieu A."/>
            <person name="Maurer C.T.C."/>
            <person name="McConnell D."/>
            <person name="McKee R.A."/>
            <person name="Messenguy F."/>
            <person name="Mewes H.-W."/>
            <person name="Molemans F."/>
            <person name="Montague M.A."/>
            <person name="Muzi Falconi M."/>
            <person name="Navas L."/>
            <person name="Newlon C.S."/>
            <person name="Noone D."/>
            <person name="Pallier C."/>
            <person name="Panzeri L."/>
            <person name="Pearson B.M."/>
            <person name="Perea J."/>
            <person name="Philippsen P."/>
            <person name="Pierard A."/>
            <person name="Planta R.J."/>
            <person name="Plevani P."/>
            <person name="Poetsch B."/>
            <person name="Pohl F.M."/>
            <person name="Purnelle B."/>
            <person name="Ramezani Rad M."/>
            <person name="Rasmussen S.W."/>
            <person name="Raynal A."/>
            <person name="Remacha M.A."/>
            <person name="Richterich P."/>
            <person name="Roberts A.B."/>
            <person name="Rodriguez F."/>
            <person name="Sanz E."/>
            <person name="Schaaff-Gerstenschlaeger I."/>
            <person name="Scherens B."/>
            <person name="Schweitzer B."/>
            <person name="Shu Y."/>
            <person name="Skala J."/>
            <person name="Slonimski P.P."/>
            <person name="Sor F."/>
            <person name="Soustelle C."/>
            <person name="Spiegelberg R."/>
            <person name="Stateva L.I."/>
            <person name="Steensma H.Y."/>
            <person name="Steiner S."/>
            <person name="Thierry A."/>
            <person name="Thireos G."/>
            <person name="Tzermia M."/>
            <person name="Urrestarazu L.A."/>
            <person name="Valle G."/>
            <person name="Vetter I."/>
            <person name="van Vliet-Reedijk J.C."/>
            <person name="Voet M."/>
            <person name="Volckaert G."/>
            <person name="Vreken P."/>
            <person name="Wang H."/>
            <person name="Warmington J.R."/>
            <person name="von Wettstein D."/>
            <person name="Wicksteed B.L."/>
            <person name="Wilson C."/>
            <person name="Wurst H."/>
            <person name="Xu G."/>
            <person name="Yoshikawa A."/>
            <person name="Zimmermann F.K."/>
            <person name="Sgouros J.G."/>
        </authorList>
    </citation>
    <scope>NUCLEOTIDE SEQUENCE [LARGE SCALE GENOMIC DNA]</scope>
    <source>
        <strain>ATCC 204508 / S288c</strain>
    </source>
</reference>
<reference key="3">
    <citation type="journal article" date="2014" name="G3 (Bethesda)">
        <title>The reference genome sequence of Saccharomyces cerevisiae: Then and now.</title>
        <authorList>
            <person name="Engel S.R."/>
            <person name="Dietrich F.S."/>
            <person name="Fisk D.G."/>
            <person name="Binkley G."/>
            <person name="Balakrishnan R."/>
            <person name="Costanzo M.C."/>
            <person name="Dwight S.S."/>
            <person name="Hitz B.C."/>
            <person name="Karra K."/>
            <person name="Nash R.S."/>
            <person name="Weng S."/>
            <person name="Wong E.D."/>
            <person name="Lloyd P."/>
            <person name="Skrzypek M.S."/>
            <person name="Miyasato S.R."/>
            <person name="Simison M."/>
            <person name="Cherry J.M."/>
        </authorList>
    </citation>
    <scope>GENOME REANNOTATION</scope>
    <source>
        <strain>ATCC 204508 / S288c</strain>
    </source>
</reference>
<reference key="4">
    <citation type="journal article" date="2007" name="Genome Res.">
        <title>Approaching a complete repository of sequence-verified protein-encoding clones for Saccharomyces cerevisiae.</title>
        <authorList>
            <person name="Hu Y."/>
            <person name="Rolfs A."/>
            <person name="Bhullar B."/>
            <person name="Murthy T.V.S."/>
            <person name="Zhu C."/>
            <person name="Berger M.F."/>
            <person name="Camargo A.A."/>
            <person name="Kelley F."/>
            <person name="McCarron S."/>
            <person name="Jepson D."/>
            <person name="Richardson A."/>
            <person name="Raphael J."/>
            <person name="Moreira D."/>
            <person name="Taycher E."/>
            <person name="Zuo D."/>
            <person name="Mohr S."/>
            <person name="Kane M.F."/>
            <person name="Williamson J."/>
            <person name="Simpson A.J.G."/>
            <person name="Bulyk M.L."/>
            <person name="Harlow E."/>
            <person name="Marsischky G."/>
            <person name="Kolodner R.D."/>
            <person name="LaBaer J."/>
        </authorList>
    </citation>
    <scope>NUCLEOTIDE SEQUENCE [GENOMIC DNA]</scope>
    <source>
        <strain>ATCC 204508 / S288c</strain>
    </source>
</reference>
<reference key="5">
    <citation type="journal article" date="2003" name="Nature">
        <title>Global analysis of protein expression in yeast.</title>
        <authorList>
            <person name="Ghaemmaghami S."/>
            <person name="Huh W.-K."/>
            <person name="Bower K."/>
            <person name="Howson R.W."/>
            <person name="Belle A."/>
            <person name="Dephoure N."/>
            <person name="O'Shea E.K."/>
            <person name="Weissman J.S."/>
        </authorList>
    </citation>
    <scope>LEVEL OF PROTEIN EXPRESSION [LARGE SCALE ANALYSIS]</scope>
</reference>
<reference key="6">
    <citation type="journal article" date="2007" name="J. Proteome Res.">
        <title>Large-scale phosphorylation analysis of alpha-factor-arrested Saccharomyces cerevisiae.</title>
        <authorList>
            <person name="Li X."/>
            <person name="Gerber S.A."/>
            <person name="Rudner A.D."/>
            <person name="Beausoleil S.A."/>
            <person name="Haas W."/>
            <person name="Villen J."/>
            <person name="Elias J.E."/>
            <person name="Gygi S.P."/>
        </authorList>
    </citation>
    <scope>PHOSPHORYLATION [LARGE SCALE ANALYSIS] AT SER-73</scope>
    <scope>IDENTIFICATION BY MASS SPECTROMETRY [LARGE SCALE ANALYSIS]</scope>
    <source>
        <strain>ADR376</strain>
    </source>
</reference>
<reference key="7">
    <citation type="journal article" date="2008" name="Mol. Cell. Proteomics">
        <title>A multidimensional chromatography technology for in-depth phosphoproteome analysis.</title>
        <authorList>
            <person name="Albuquerque C.P."/>
            <person name="Smolka M.B."/>
            <person name="Payne S.H."/>
            <person name="Bafna V."/>
            <person name="Eng J."/>
            <person name="Zhou H."/>
        </authorList>
    </citation>
    <scope>PHOSPHORYLATION [LARGE SCALE ANALYSIS] AT SER-73</scope>
    <scope>IDENTIFICATION BY MASS SPECTROMETRY [LARGE SCALE ANALYSIS]</scope>
</reference>
<reference key="8">
    <citation type="journal article" date="2009" name="Science">
        <title>Global analysis of Cdk1 substrate phosphorylation sites provides insights into evolution.</title>
        <authorList>
            <person name="Holt L.J."/>
            <person name="Tuch B.B."/>
            <person name="Villen J."/>
            <person name="Johnson A.D."/>
            <person name="Gygi S.P."/>
            <person name="Morgan D.O."/>
        </authorList>
    </citation>
    <scope>PHOSPHORYLATION [LARGE SCALE ANALYSIS] AT SER-73</scope>
    <scope>IDENTIFICATION BY MASS SPECTROMETRY [LARGE SCALE ANALYSIS]</scope>
</reference>